<evidence type="ECO:0000250" key="1"/>
<evidence type="ECO:0000255" key="2"/>
<evidence type="ECO:0000305" key="3"/>
<protein>
    <recommendedName>
        <fullName>Phosphatidate cytidylyltransferase</fullName>
        <ecNumber>2.7.7.41</ecNumber>
    </recommendedName>
    <alternativeName>
        <fullName>CDP-DAG synthase</fullName>
    </alternativeName>
    <alternativeName>
        <fullName>CDP-DG synthase</fullName>
    </alternativeName>
    <alternativeName>
        <fullName>CDP-diacylglycerol synthase</fullName>
        <shortName>CDS</shortName>
    </alternativeName>
    <alternativeName>
        <fullName>CDP-diglyceride pyrophosphorylase</fullName>
    </alternativeName>
    <alternativeName>
        <fullName>CDP-diglyceride synthase</fullName>
    </alternativeName>
    <alternativeName>
        <fullName>CTP:phosphatidate cytidylyltransferase</fullName>
    </alternativeName>
</protein>
<reference key="1">
    <citation type="journal article" date="2005" name="Proc. Natl. Acad. Sci. U.S.A.">
        <title>Whole genome sequence of Staphylococcus saprophyticus reveals the pathogenesis of uncomplicated urinary tract infection.</title>
        <authorList>
            <person name="Kuroda M."/>
            <person name="Yamashita A."/>
            <person name="Hirakawa H."/>
            <person name="Kumano M."/>
            <person name="Morikawa K."/>
            <person name="Higashide M."/>
            <person name="Maruyama A."/>
            <person name="Inose Y."/>
            <person name="Matoba K."/>
            <person name="Toh H."/>
            <person name="Kuhara S."/>
            <person name="Hattori M."/>
            <person name="Ohta T."/>
        </authorList>
    </citation>
    <scope>NUCLEOTIDE SEQUENCE [LARGE SCALE GENOMIC DNA]</scope>
    <source>
        <strain>ATCC 15305 / DSM 20229 / NCIMB 8711 / NCTC 7292 / S-41</strain>
    </source>
</reference>
<comment type="catalytic activity">
    <reaction>
        <text>a 1,2-diacyl-sn-glycero-3-phosphate + CTP + H(+) = a CDP-1,2-diacyl-sn-glycerol + diphosphate</text>
        <dbReference type="Rhea" id="RHEA:16229"/>
        <dbReference type="ChEBI" id="CHEBI:15378"/>
        <dbReference type="ChEBI" id="CHEBI:33019"/>
        <dbReference type="ChEBI" id="CHEBI:37563"/>
        <dbReference type="ChEBI" id="CHEBI:58332"/>
        <dbReference type="ChEBI" id="CHEBI:58608"/>
        <dbReference type="EC" id="2.7.7.41"/>
    </reaction>
</comment>
<comment type="pathway">
    <text>Phospholipid metabolism; CDP-diacylglycerol biosynthesis; CDP-diacylglycerol from sn-glycerol 3-phosphate: step 3/3.</text>
</comment>
<comment type="subcellular location">
    <subcellularLocation>
        <location evidence="1">Cell membrane</location>
        <topology evidence="1">Multi-pass membrane protein</topology>
    </subcellularLocation>
</comment>
<comment type="similarity">
    <text evidence="3">Belongs to the CDS family.</text>
</comment>
<organism>
    <name type="scientific">Staphylococcus saprophyticus subsp. saprophyticus (strain ATCC 15305 / DSM 20229 / NCIMB 8711 / NCTC 7292 / S-41)</name>
    <dbReference type="NCBI Taxonomy" id="342451"/>
    <lineage>
        <taxon>Bacteria</taxon>
        <taxon>Bacillati</taxon>
        <taxon>Bacillota</taxon>
        <taxon>Bacilli</taxon>
        <taxon>Bacillales</taxon>
        <taxon>Staphylococcaceae</taxon>
        <taxon>Staphylococcus</taxon>
    </lineage>
</organism>
<keyword id="KW-1003">Cell membrane</keyword>
<keyword id="KW-0444">Lipid biosynthesis</keyword>
<keyword id="KW-0443">Lipid metabolism</keyword>
<keyword id="KW-0472">Membrane</keyword>
<keyword id="KW-0548">Nucleotidyltransferase</keyword>
<keyword id="KW-0594">Phospholipid biosynthesis</keyword>
<keyword id="KW-1208">Phospholipid metabolism</keyword>
<keyword id="KW-1185">Reference proteome</keyword>
<keyword id="KW-0808">Transferase</keyword>
<keyword id="KW-0812">Transmembrane</keyword>
<keyword id="KW-1133">Transmembrane helix</keyword>
<gene>
    <name type="primary">cdsA</name>
    <name type="ordered locus">SSP1507</name>
</gene>
<proteinExistence type="inferred from homology"/>
<dbReference type="EC" id="2.7.7.41"/>
<dbReference type="EMBL" id="AP008934">
    <property type="protein sequence ID" value="BAE18652.1"/>
    <property type="molecule type" value="Genomic_DNA"/>
</dbReference>
<dbReference type="RefSeq" id="WP_002483462.1">
    <property type="nucleotide sequence ID" value="NZ_MTGA01000034.1"/>
</dbReference>
<dbReference type="SMR" id="Q49X46"/>
<dbReference type="GeneID" id="3617249"/>
<dbReference type="KEGG" id="ssp:SSP1507"/>
<dbReference type="eggNOG" id="COG4589">
    <property type="taxonomic scope" value="Bacteria"/>
</dbReference>
<dbReference type="HOGENOM" id="CLU_037294_2_2_9"/>
<dbReference type="OrthoDB" id="9799199at2"/>
<dbReference type="UniPathway" id="UPA00557">
    <property type="reaction ID" value="UER00614"/>
</dbReference>
<dbReference type="Proteomes" id="UP000006371">
    <property type="component" value="Chromosome"/>
</dbReference>
<dbReference type="GO" id="GO:0005886">
    <property type="term" value="C:plasma membrane"/>
    <property type="evidence" value="ECO:0007669"/>
    <property type="project" value="UniProtKB-SubCell"/>
</dbReference>
<dbReference type="GO" id="GO:0004605">
    <property type="term" value="F:phosphatidate cytidylyltransferase activity"/>
    <property type="evidence" value="ECO:0007669"/>
    <property type="project" value="UniProtKB-EC"/>
</dbReference>
<dbReference type="GO" id="GO:0016024">
    <property type="term" value="P:CDP-diacylglycerol biosynthetic process"/>
    <property type="evidence" value="ECO:0007669"/>
    <property type="project" value="UniProtKB-UniPathway"/>
</dbReference>
<dbReference type="InterPro" id="IPR000374">
    <property type="entry name" value="PC_trans"/>
</dbReference>
<dbReference type="PANTHER" id="PTHR46382">
    <property type="entry name" value="PHOSPHATIDATE CYTIDYLYLTRANSFERASE"/>
    <property type="match status" value="1"/>
</dbReference>
<dbReference type="PANTHER" id="PTHR46382:SF1">
    <property type="entry name" value="PHOSPHATIDATE CYTIDYLYLTRANSFERASE"/>
    <property type="match status" value="1"/>
</dbReference>
<dbReference type="Pfam" id="PF01148">
    <property type="entry name" value="CTP_transf_1"/>
    <property type="match status" value="1"/>
</dbReference>
<dbReference type="PROSITE" id="PS01315">
    <property type="entry name" value="CDS"/>
    <property type="match status" value="1"/>
</dbReference>
<sequence length="260" mass="29066">MKVRTLTAIIALIVFLPVLLKGGLILMLFSYLLAFIALKELLNMNMIKFLSIPGIISALGILIIMLPQDAGSWVNDLQLKSLIAMSFILLSYTVLSKNRFSFMDAAFCLMSIAYVGIGFMYLYETRSEGLHYILFAFLVVWLTDTGAYIFGRLMGKHKLWPVISPNKTVEGFVGGLICSLIVPLVMMIFVDFNIALWLLLIITIILSMFGQLGDLVESGFKRHFGVKDSGRILPGHGGILDRFDSFMFVLPLLNILLIQI</sequence>
<name>CDSA_STAS1</name>
<accession>Q49X46</accession>
<feature type="chain" id="PRO_0000090756" description="Phosphatidate cytidylyltransferase">
    <location>
        <begin position="1"/>
        <end position="260"/>
    </location>
</feature>
<feature type="transmembrane region" description="Helical" evidence="2">
    <location>
        <begin position="9"/>
        <end position="29"/>
    </location>
</feature>
<feature type="transmembrane region" description="Helical" evidence="2">
    <location>
        <begin position="46"/>
        <end position="66"/>
    </location>
</feature>
<feature type="transmembrane region" description="Helical" evidence="2">
    <location>
        <begin position="70"/>
        <end position="90"/>
    </location>
</feature>
<feature type="transmembrane region" description="Helical" evidence="2">
    <location>
        <begin position="102"/>
        <end position="122"/>
    </location>
</feature>
<feature type="transmembrane region" description="Helical" evidence="2">
    <location>
        <begin position="130"/>
        <end position="150"/>
    </location>
</feature>
<feature type="transmembrane region" description="Helical" evidence="2">
    <location>
        <begin position="172"/>
        <end position="192"/>
    </location>
</feature>
<feature type="transmembrane region" description="Helical" evidence="2">
    <location>
        <begin position="196"/>
        <end position="216"/>
    </location>
</feature>